<proteinExistence type="inferred from homology"/>
<keyword id="KW-0240">DNA-directed RNA polymerase</keyword>
<keyword id="KW-0548">Nucleotidyltransferase</keyword>
<keyword id="KW-0804">Transcription</keyword>
<keyword id="KW-0808">Transferase</keyword>
<gene>
    <name evidence="1" type="primary">rpoB</name>
    <name type="ordered locus">RoseRS_1265</name>
</gene>
<organism>
    <name type="scientific">Roseiflexus sp. (strain RS-1)</name>
    <dbReference type="NCBI Taxonomy" id="357808"/>
    <lineage>
        <taxon>Bacteria</taxon>
        <taxon>Bacillati</taxon>
        <taxon>Chloroflexota</taxon>
        <taxon>Chloroflexia</taxon>
        <taxon>Chloroflexales</taxon>
        <taxon>Roseiflexineae</taxon>
        <taxon>Roseiflexaceae</taxon>
        <taxon>Roseiflexus</taxon>
    </lineage>
</organism>
<comment type="function">
    <text evidence="1">DNA-dependent RNA polymerase catalyzes the transcription of DNA into RNA using the four ribonucleoside triphosphates as substrates.</text>
</comment>
<comment type="catalytic activity">
    <reaction evidence="1">
        <text>RNA(n) + a ribonucleoside 5'-triphosphate = RNA(n+1) + diphosphate</text>
        <dbReference type="Rhea" id="RHEA:21248"/>
        <dbReference type="Rhea" id="RHEA-COMP:14527"/>
        <dbReference type="Rhea" id="RHEA-COMP:17342"/>
        <dbReference type="ChEBI" id="CHEBI:33019"/>
        <dbReference type="ChEBI" id="CHEBI:61557"/>
        <dbReference type="ChEBI" id="CHEBI:140395"/>
        <dbReference type="EC" id="2.7.7.6"/>
    </reaction>
</comment>
<comment type="subunit">
    <text evidence="1">The RNAP catalytic core consists of 2 alpha, 1 beta, 1 beta' and 1 omega subunit. When a sigma factor is associated with the core the holoenzyme is formed, which can initiate transcription.</text>
</comment>
<comment type="similarity">
    <text evidence="1">Belongs to the RNA polymerase beta chain family.</text>
</comment>
<sequence length="1229" mass="137727">MPPLTQSVVLQPLIVPNDVGIDALHRGKIERYSFARISNAIELPKLIETQLNSFEWFRKEGLRELFEEISPITDFTGKNMELRFLDYHFGEPRYNEHECRERGITYSAPIRVNVQLRILSTGELKESEIFLGDFPLMTENGTFVINGAERVVVSQLIRSPGVYFKEEKDPTSGRSLHSAKLIPSRGAWLEFETNKRDVISVKVDRKRKIPVTILLRAVLGWRANPDGSGQWAPDNELDQRGRDEEILELFAHLETGDHQYIKATLDKDPARHAKEALLELYKRLRPGDPPTLDNARNLIEALLFNPRRYDLSRVGRYKLNKNLWEKDTRPEVRRQAPDVKVRVLLPDDIFKIVERMIQLNNGTPGLRADDIDHLGNRRVRTVGELIQQQFRVGLLRMERVIKERMSLQDPETATPNALVNIRPVVAAMREFFGGAQLSQFMDQTNPLAELTHKRRLSALGPGGLSRDRAGFEVRDVHHSHYGRICPVETPEGPNIGLIGTMSTYARVNEMGFLETPYRKVYREVPNASEWERQGLLLRDVRDLRTGELIAVRGTRVDAAVARRIAVALLRGQILREDVVDPTTGEVIAHAGQEVNRALAERIVETPLKIIKIRPVVSQEVDYLSADEEDRFVIVQANAPLDEHNRFLEGTVSVRYAGDFDDVPIERVDYMDVSPKQVVSVSTALIPFLEHDDANRALMGSNMQRQAVPLLRPDAPIVGTGMEYVAARDSGQVVVAKADGVVLSATADEIVILEDDGNERSYRLRKFMRSNQDTCINQRPIVSRGQRVRKGDIIADSSSTDNGELALGQNVLVAFMPWEGGNFEDAILVSERLVREDIFTSIHIEKYEVEARDTKLGPEEITRDIPNVGQDSLRNLDDRGIIYIGAEVQPNDILVGKITPKGETDLTAEERLLRAIFGEKAREVKDSSLRVPNGVRGKVIDVKVFTRDDDVELPVGVNQRVDVLLCQKRKISAGDKMAGRHGNKGVVSRILPIEDMPFLPDGTPVDIILNPIGVPSRMNIGQILETHLGWAAARLGYRVATPVFDGATETEIKEWLKRADLPPDGKITLYDGRTGEAFDRPVTVGYIYMMKLAHLVEDKIHARSTGPYSLVTQQPLGGKAQFGGQRFGEMEVWALEAYGAAYTLQEMLTVKSDDVVGRVKTYEAIVKGEPIQEAGVPESFKVLIKELQSLGLSVEVLSADETPVELTDDADSDLAALDGINLSGMERGEF</sequence>
<reference key="1">
    <citation type="submission" date="2007-04" db="EMBL/GenBank/DDBJ databases">
        <title>Complete sequence of Roseiflexus sp. RS-1.</title>
        <authorList>
            <consortium name="US DOE Joint Genome Institute"/>
            <person name="Copeland A."/>
            <person name="Lucas S."/>
            <person name="Lapidus A."/>
            <person name="Barry K."/>
            <person name="Detter J.C."/>
            <person name="Glavina del Rio T."/>
            <person name="Hammon N."/>
            <person name="Israni S."/>
            <person name="Dalin E."/>
            <person name="Tice H."/>
            <person name="Pitluck S."/>
            <person name="Chertkov O."/>
            <person name="Brettin T."/>
            <person name="Bruce D."/>
            <person name="Han C."/>
            <person name="Schmutz J."/>
            <person name="Larimer F."/>
            <person name="Land M."/>
            <person name="Hauser L."/>
            <person name="Kyrpides N."/>
            <person name="Mikhailova N."/>
            <person name="Bryant D.A."/>
            <person name="Richardson P."/>
        </authorList>
    </citation>
    <scope>NUCLEOTIDE SEQUENCE [LARGE SCALE GENOMIC DNA]</scope>
    <source>
        <strain>RS-1</strain>
    </source>
</reference>
<name>RPOB_ROSS1</name>
<dbReference type="EC" id="2.7.7.6" evidence="1"/>
<dbReference type="EMBL" id="CP000686">
    <property type="protein sequence ID" value="ABQ89670.1"/>
    <property type="molecule type" value="Genomic_DNA"/>
</dbReference>
<dbReference type="RefSeq" id="WP_011956022.1">
    <property type="nucleotide sequence ID" value="NC_009523.1"/>
</dbReference>
<dbReference type="SMR" id="A5USR7"/>
<dbReference type="STRING" id="357808.RoseRS_1265"/>
<dbReference type="KEGG" id="rrs:RoseRS_1265"/>
<dbReference type="eggNOG" id="COG0085">
    <property type="taxonomic scope" value="Bacteria"/>
</dbReference>
<dbReference type="HOGENOM" id="CLU_000524_4_1_0"/>
<dbReference type="OrthoDB" id="9803954at2"/>
<dbReference type="Proteomes" id="UP000006554">
    <property type="component" value="Chromosome"/>
</dbReference>
<dbReference type="GO" id="GO:0000428">
    <property type="term" value="C:DNA-directed RNA polymerase complex"/>
    <property type="evidence" value="ECO:0007669"/>
    <property type="project" value="UniProtKB-KW"/>
</dbReference>
<dbReference type="GO" id="GO:0003677">
    <property type="term" value="F:DNA binding"/>
    <property type="evidence" value="ECO:0007669"/>
    <property type="project" value="UniProtKB-UniRule"/>
</dbReference>
<dbReference type="GO" id="GO:0003899">
    <property type="term" value="F:DNA-directed RNA polymerase activity"/>
    <property type="evidence" value="ECO:0007669"/>
    <property type="project" value="UniProtKB-UniRule"/>
</dbReference>
<dbReference type="GO" id="GO:0032549">
    <property type="term" value="F:ribonucleoside binding"/>
    <property type="evidence" value="ECO:0007669"/>
    <property type="project" value="InterPro"/>
</dbReference>
<dbReference type="GO" id="GO:0006351">
    <property type="term" value="P:DNA-templated transcription"/>
    <property type="evidence" value="ECO:0007669"/>
    <property type="project" value="UniProtKB-UniRule"/>
</dbReference>
<dbReference type="CDD" id="cd00653">
    <property type="entry name" value="RNA_pol_B_RPB2"/>
    <property type="match status" value="1"/>
</dbReference>
<dbReference type="FunFam" id="3.90.1800.10:FF:000001">
    <property type="entry name" value="DNA-directed RNA polymerase subunit beta"/>
    <property type="match status" value="1"/>
</dbReference>
<dbReference type="Gene3D" id="2.40.50.100">
    <property type="match status" value="1"/>
</dbReference>
<dbReference type="Gene3D" id="2.40.50.150">
    <property type="match status" value="1"/>
</dbReference>
<dbReference type="Gene3D" id="3.90.1100.10">
    <property type="match status" value="3"/>
</dbReference>
<dbReference type="Gene3D" id="2.30.150.10">
    <property type="entry name" value="DNA-directed RNA polymerase, beta subunit, external 1 domain"/>
    <property type="match status" value="1"/>
</dbReference>
<dbReference type="Gene3D" id="2.40.270.10">
    <property type="entry name" value="DNA-directed RNA polymerase, subunit 2, domain 6"/>
    <property type="match status" value="1"/>
</dbReference>
<dbReference type="Gene3D" id="3.90.1800.10">
    <property type="entry name" value="RNA polymerase alpha subunit dimerisation domain"/>
    <property type="match status" value="1"/>
</dbReference>
<dbReference type="HAMAP" id="MF_01321">
    <property type="entry name" value="RNApol_bact_RpoB"/>
    <property type="match status" value="1"/>
</dbReference>
<dbReference type="InterPro" id="IPR042107">
    <property type="entry name" value="DNA-dir_RNA_pol_bsu_ext_1_sf"/>
</dbReference>
<dbReference type="InterPro" id="IPR019462">
    <property type="entry name" value="DNA-dir_RNA_pol_bsu_external_1"/>
</dbReference>
<dbReference type="InterPro" id="IPR015712">
    <property type="entry name" value="DNA-dir_RNA_pol_su2"/>
</dbReference>
<dbReference type="InterPro" id="IPR007120">
    <property type="entry name" value="DNA-dir_RNAP_su2_dom"/>
</dbReference>
<dbReference type="InterPro" id="IPR037033">
    <property type="entry name" value="DNA-dir_RNAP_su2_hyb_sf"/>
</dbReference>
<dbReference type="InterPro" id="IPR010243">
    <property type="entry name" value="RNA_pol_bsu_bac"/>
</dbReference>
<dbReference type="InterPro" id="IPR007121">
    <property type="entry name" value="RNA_pol_bsu_CS"/>
</dbReference>
<dbReference type="InterPro" id="IPR007644">
    <property type="entry name" value="RNA_pol_bsu_protrusion"/>
</dbReference>
<dbReference type="InterPro" id="IPR007642">
    <property type="entry name" value="RNA_pol_Rpb2_2"/>
</dbReference>
<dbReference type="InterPro" id="IPR007645">
    <property type="entry name" value="RNA_pol_Rpb2_3"/>
</dbReference>
<dbReference type="InterPro" id="IPR007641">
    <property type="entry name" value="RNA_pol_Rpb2_7"/>
</dbReference>
<dbReference type="InterPro" id="IPR014724">
    <property type="entry name" value="RNA_pol_RPB2_OB-fold"/>
</dbReference>
<dbReference type="NCBIfam" id="NF001616">
    <property type="entry name" value="PRK00405.1"/>
    <property type="match status" value="1"/>
</dbReference>
<dbReference type="PANTHER" id="PTHR20856">
    <property type="entry name" value="DNA-DIRECTED RNA POLYMERASE I SUBUNIT 2"/>
    <property type="match status" value="1"/>
</dbReference>
<dbReference type="Pfam" id="PF04563">
    <property type="entry name" value="RNA_pol_Rpb2_1"/>
    <property type="match status" value="1"/>
</dbReference>
<dbReference type="Pfam" id="PF04561">
    <property type="entry name" value="RNA_pol_Rpb2_2"/>
    <property type="match status" value="2"/>
</dbReference>
<dbReference type="Pfam" id="PF04565">
    <property type="entry name" value="RNA_pol_Rpb2_3"/>
    <property type="match status" value="1"/>
</dbReference>
<dbReference type="Pfam" id="PF10385">
    <property type="entry name" value="RNA_pol_Rpb2_45"/>
    <property type="match status" value="1"/>
</dbReference>
<dbReference type="Pfam" id="PF00562">
    <property type="entry name" value="RNA_pol_Rpb2_6"/>
    <property type="match status" value="1"/>
</dbReference>
<dbReference type="Pfam" id="PF04560">
    <property type="entry name" value="RNA_pol_Rpb2_7"/>
    <property type="match status" value="1"/>
</dbReference>
<dbReference type="SUPFAM" id="SSF64484">
    <property type="entry name" value="beta and beta-prime subunits of DNA dependent RNA-polymerase"/>
    <property type="match status" value="1"/>
</dbReference>
<dbReference type="PROSITE" id="PS01166">
    <property type="entry name" value="RNA_POL_BETA"/>
    <property type="match status" value="1"/>
</dbReference>
<accession>A5USR7</accession>
<protein>
    <recommendedName>
        <fullName evidence="1">DNA-directed RNA polymerase subunit beta</fullName>
        <shortName evidence="1">RNAP subunit beta</shortName>
        <ecNumber evidence="1">2.7.7.6</ecNumber>
    </recommendedName>
    <alternativeName>
        <fullName evidence="1">RNA polymerase subunit beta</fullName>
    </alternativeName>
    <alternativeName>
        <fullName evidence="1">Transcriptase subunit beta</fullName>
    </alternativeName>
</protein>
<evidence type="ECO:0000255" key="1">
    <source>
        <dbReference type="HAMAP-Rule" id="MF_01321"/>
    </source>
</evidence>
<feature type="chain" id="PRO_0000329186" description="DNA-directed RNA polymerase subunit beta">
    <location>
        <begin position="1"/>
        <end position="1229"/>
    </location>
</feature>